<proteinExistence type="inferred from homology"/>
<accession>B3STR0</accession>
<organismHost>
    <name type="scientific">Gallus gallus</name>
    <name type="common">Chicken</name>
    <dbReference type="NCBI Taxonomy" id="9031"/>
</organismHost>
<evidence type="ECO:0000255" key="1">
    <source>
        <dbReference type="HAMAP-Rule" id="MF_04129"/>
    </source>
</evidence>
<protein>
    <recommendedName>
        <fullName evidence="1">Intermediate capsid protein VP6</fullName>
    </recommendedName>
</protein>
<keyword id="KW-0106">Calcium</keyword>
<keyword id="KW-0167">Capsid protein</keyword>
<keyword id="KW-1154">Intermediate capsid protein</keyword>
<keyword id="KW-0479">Metal-binding</keyword>
<keyword id="KW-0832">Ubl conjugation</keyword>
<keyword id="KW-0946">Virion</keyword>
<keyword id="KW-0862">Zinc</keyword>
<dbReference type="EMBL" id="EF687020">
    <property type="protein sequence ID" value="ABV46497.1"/>
    <property type="molecule type" value="Genomic_RNA"/>
</dbReference>
<dbReference type="SMR" id="B3STR0"/>
<dbReference type="GO" id="GO:0019031">
    <property type="term" value="C:viral envelope"/>
    <property type="evidence" value="ECO:0007669"/>
    <property type="project" value="UniProtKB-UniRule"/>
</dbReference>
<dbReference type="GO" id="GO:0039626">
    <property type="term" value="C:viral intermediate capsid"/>
    <property type="evidence" value="ECO:0007669"/>
    <property type="project" value="UniProtKB-UniRule"/>
</dbReference>
<dbReference type="GO" id="GO:0046789">
    <property type="term" value="F:host cell surface receptor binding"/>
    <property type="evidence" value="ECO:0007669"/>
    <property type="project" value="UniProtKB-UniRule"/>
</dbReference>
<dbReference type="GO" id="GO:0046872">
    <property type="term" value="F:metal ion binding"/>
    <property type="evidence" value="ECO:0007669"/>
    <property type="project" value="UniProtKB-UniRule"/>
</dbReference>
<dbReference type="GO" id="GO:0005198">
    <property type="term" value="F:structural molecule activity"/>
    <property type="evidence" value="ECO:0007669"/>
    <property type="project" value="UniProtKB-UniRule"/>
</dbReference>
<dbReference type="GO" id="GO:0019064">
    <property type="term" value="P:fusion of virus membrane with host plasma membrane"/>
    <property type="evidence" value="ECO:0007669"/>
    <property type="project" value="UniProtKB-UniRule"/>
</dbReference>
<dbReference type="Gene3D" id="2.60.120.170">
    <property type="match status" value="1"/>
</dbReference>
<dbReference type="Gene3D" id="1.10.1350.10">
    <property type="entry name" value="Viral capsid alpha domain"/>
    <property type="match status" value="1"/>
</dbReference>
<dbReference type="HAMAP" id="MF_04126">
    <property type="entry name" value="Rota_VP6"/>
    <property type="match status" value="1"/>
</dbReference>
<dbReference type="HAMAP" id="MF_04129">
    <property type="entry name" value="Rota_VP6_A"/>
    <property type="match status" value="1"/>
</dbReference>
<dbReference type="InterPro" id="IPR008980">
    <property type="entry name" value="Capsid_hemagglutn"/>
</dbReference>
<dbReference type="InterPro" id="IPR001385">
    <property type="entry name" value="Rotavirus_A/C_VP6"/>
</dbReference>
<dbReference type="InterPro" id="IPR008935">
    <property type="entry name" value="Virus_capsid_a-hlx_vir"/>
</dbReference>
<dbReference type="Pfam" id="PF00980">
    <property type="entry name" value="Rota_Capsid_VP6"/>
    <property type="match status" value="1"/>
</dbReference>
<dbReference type="SUPFAM" id="SSF48345">
    <property type="entry name" value="A virus capsid protein alpha-helical domain"/>
    <property type="match status" value="1"/>
</dbReference>
<dbReference type="SUPFAM" id="SSF49818">
    <property type="entry name" value="Viral protein domain"/>
    <property type="match status" value="1"/>
</dbReference>
<name>VP6_ROTCC</name>
<reference key="1">
    <citation type="journal article" date="2008" name="Virus Res.">
        <title>VP6 capsid protein of chicken rotavirus strain CH2: Sequence, Phylogeny and In Silico antigenic analyses.</title>
        <authorList>
            <person name="Buragohain M."/>
            <person name="Cherian S.S."/>
            <person name="Prabhakar G."/>
            <person name="Chitambar S.D."/>
        </authorList>
    </citation>
    <scope>NUCLEOTIDE SEQUENCE [GENOMIC RNA]</scope>
</reference>
<feature type="chain" id="PRO_0000368172" description="Intermediate capsid protein VP6">
    <location>
        <begin position="1"/>
        <end position="397"/>
    </location>
</feature>
<feature type="region of interest" description="Interaction with the inner capsid protein VP2" evidence="1">
    <location>
        <begin position="62"/>
        <end position="73"/>
    </location>
</feature>
<feature type="binding site" evidence="1">
    <location>
        <position position="153"/>
    </location>
    <ligand>
        <name>Zn(2+)</name>
        <dbReference type="ChEBI" id="CHEBI:29105"/>
        <note>ligand shared between all trimeric partners</note>
    </ligand>
</feature>
<feature type="binding site" evidence="1">
    <location>
        <position position="266"/>
    </location>
    <ligand>
        <name>Ca(2+)</name>
        <dbReference type="ChEBI" id="CHEBI:29108"/>
    </ligand>
</feature>
<feature type="binding site" evidence="1">
    <location>
        <position position="286"/>
    </location>
    <ligand>
        <name>Ca(2+)</name>
        <dbReference type="ChEBI" id="CHEBI:29108"/>
    </ligand>
</feature>
<organism>
    <name type="scientific">Rotavirus A (strain RVA/Chicken/Ireland/Ch2/1979/G7P[X])</name>
    <name type="common">RV-A</name>
    <name type="synonym">Rotavirus A (strain Ch-2)</name>
    <dbReference type="NCBI Taxonomy" id="31589"/>
    <lineage>
        <taxon>Viruses</taxon>
        <taxon>Riboviria</taxon>
        <taxon>Orthornavirae</taxon>
        <taxon>Duplornaviricota</taxon>
        <taxon>Resentoviricetes</taxon>
        <taxon>Reovirales</taxon>
        <taxon>Sedoreoviridae</taxon>
        <taxon>Rotavirus</taxon>
        <taxon>Rotavirus A</taxon>
    </lineage>
</organism>
<sequence length="397" mass="44550">MDVLYSLAKTLKDARARIVEGTLYTNVADIVQQINQVINSINGSTFQTGGIGNLPVRNWTFDFGTLGTTLLNLDANYVENARTTIDYFIDFVDSVCIDEIVRESQRNGIAPQFDLLRQLSNAKYKRINYDNESEYIENWNLQNRRQRTGYLLHKPNILPYNNSFTLIRSQPAHDNVCGTIWLNNGSEIEIAGFDSECALNAPGNIQEFEHVVPMRRVLNNATVSLLPYAPRLTQRAVIPTADGLNTWLFNPIILRPNNVQVEFLLNGQVITNYQARYGTLAARNFDSIRISFQLVRPPNMTPAVAALFPQAAPFPNHATVGLTLKIESASCESVLSDANEPYLSIVTGLRQEYAIPVGPVFPAGMNWTELLNNYSVSREDNLQRIFTAASIRSMIIK</sequence>
<comment type="function">
    <text evidence="1">Intermediate capsid protein that self assembles to form an icosahedral capsid with a T=13 symmetry, which consists of 230 trimers of VP6, with channels at each of its five-fold vertices. This capsid constitutes the middle concentric layer of the viral mature particle. The innermost VP2 capsid and the intermediate VP6 capsid remain intact following cell entry to protect the dsRNA from degradation and to prevent unfavorable antiviral responses in the host cell during all the replication cycle of the virus. Nascent transcripts are transcribed within the structural confines of this double-layered particle (DLP) and are extruded through the channels at the five-fold axes. VP6 is required for the transcription activity of the DLP.</text>
</comment>
<comment type="subunit">
    <text evidence="1">Homotrimer. Interacts with the inner capsid protein VP2. Interacts with the outer capsid glycoprotein VP7. Interacts with the outer capsid protein VP5*.</text>
</comment>
<comment type="subcellular location">
    <subcellularLocation>
        <location evidence="1">Virion</location>
    </subcellularLocation>
    <text evidence="1">Component of the intermediate capsid. Also found in spherical cytoplasmic structures, called virus factories, that appear early after infection and are the site of viral replication and packaging.</text>
</comment>
<comment type="PTM">
    <text evidence="1">The N-terminus is blocked.</text>
</comment>
<comment type="PTM">
    <text evidence="1">Sumoylated with SUMO1 and SUMO2. Sumoylation of viral proteins seems to have a positive role on viral replication.</text>
</comment>
<comment type="miscellaneous">
    <text evidence="1">The VP6 trimer contains a zinc ion located at the center of the molecule. The zinc ion is not essential for either trimerization or transcription activity of the DLP. Zinc-depleted VP6 has an increased sensitivity to proteases.</text>
</comment>
<comment type="similarity">
    <text evidence="1">Belongs to the rotavirus VP6 family.</text>
</comment>